<dbReference type="EMBL" id="L39265">
    <property type="protein sequence ID" value="AAA91096.1"/>
    <property type="molecule type" value="Genomic_DNA"/>
</dbReference>
<dbReference type="EMBL" id="AL591688">
    <property type="protein sequence ID" value="CAC41804.1"/>
    <property type="molecule type" value="Genomic_DNA"/>
</dbReference>
<dbReference type="RefSeq" id="NP_384473.1">
    <property type="nucleotide sequence ID" value="NC_003047.1"/>
</dbReference>
<dbReference type="RefSeq" id="WP_010968533.1">
    <property type="nucleotide sequence ID" value="NC_003047.1"/>
</dbReference>
<dbReference type="SMR" id="P48948"/>
<dbReference type="EnsemblBacteria" id="CAC41804">
    <property type="protein sequence ID" value="CAC41804"/>
    <property type="gene ID" value="SMc01152"/>
</dbReference>
<dbReference type="KEGG" id="sme:SMc01152"/>
<dbReference type="PATRIC" id="fig|266834.11.peg.1739"/>
<dbReference type="eggNOG" id="COG0268">
    <property type="taxonomic scope" value="Bacteria"/>
</dbReference>
<dbReference type="HOGENOM" id="CLU_160655_3_0_5"/>
<dbReference type="OrthoDB" id="9807974at2"/>
<dbReference type="Proteomes" id="UP000001976">
    <property type="component" value="Chromosome"/>
</dbReference>
<dbReference type="GO" id="GO:0005829">
    <property type="term" value="C:cytosol"/>
    <property type="evidence" value="ECO:0007669"/>
    <property type="project" value="TreeGrafter"/>
</dbReference>
<dbReference type="GO" id="GO:0015935">
    <property type="term" value="C:small ribosomal subunit"/>
    <property type="evidence" value="ECO:0007669"/>
    <property type="project" value="TreeGrafter"/>
</dbReference>
<dbReference type="GO" id="GO:0070181">
    <property type="term" value="F:small ribosomal subunit rRNA binding"/>
    <property type="evidence" value="ECO:0007669"/>
    <property type="project" value="TreeGrafter"/>
</dbReference>
<dbReference type="GO" id="GO:0003735">
    <property type="term" value="F:structural constituent of ribosome"/>
    <property type="evidence" value="ECO:0007669"/>
    <property type="project" value="InterPro"/>
</dbReference>
<dbReference type="GO" id="GO:0006412">
    <property type="term" value="P:translation"/>
    <property type="evidence" value="ECO:0007669"/>
    <property type="project" value="UniProtKB-UniRule"/>
</dbReference>
<dbReference type="Gene3D" id="1.20.58.110">
    <property type="entry name" value="Ribosomal protein S20"/>
    <property type="match status" value="1"/>
</dbReference>
<dbReference type="HAMAP" id="MF_00500">
    <property type="entry name" value="Ribosomal_bS20"/>
    <property type="match status" value="1"/>
</dbReference>
<dbReference type="InterPro" id="IPR002583">
    <property type="entry name" value="Ribosomal_bS20"/>
</dbReference>
<dbReference type="InterPro" id="IPR036510">
    <property type="entry name" value="Ribosomal_bS20_sf"/>
</dbReference>
<dbReference type="NCBIfam" id="TIGR00029">
    <property type="entry name" value="S20"/>
    <property type="match status" value="1"/>
</dbReference>
<dbReference type="PANTHER" id="PTHR33398">
    <property type="entry name" value="30S RIBOSOMAL PROTEIN S20"/>
    <property type="match status" value="1"/>
</dbReference>
<dbReference type="PANTHER" id="PTHR33398:SF1">
    <property type="entry name" value="SMALL RIBOSOMAL SUBUNIT PROTEIN BS20C"/>
    <property type="match status" value="1"/>
</dbReference>
<dbReference type="Pfam" id="PF01649">
    <property type="entry name" value="Ribosomal_S20p"/>
    <property type="match status" value="1"/>
</dbReference>
<dbReference type="SUPFAM" id="SSF46992">
    <property type="entry name" value="Ribosomal protein S20"/>
    <property type="match status" value="1"/>
</dbReference>
<accession>P48948</accession>
<protein>
    <recommendedName>
        <fullName evidence="1">Small ribosomal subunit protein bS20</fullName>
    </recommendedName>
    <alternativeName>
        <fullName evidence="3">30S ribosomal protein S20</fullName>
    </alternativeName>
</protein>
<gene>
    <name evidence="1" type="primary">rpsT</name>
    <name type="ordered locus">R00367</name>
    <name type="ORF">SMc01152</name>
</gene>
<organism>
    <name type="scientific">Rhizobium meliloti (strain 1021)</name>
    <name type="common">Ensifer meliloti</name>
    <name type="synonym">Sinorhizobium meliloti</name>
    <dbReference type="NCBI Taxonomy" id="266834"/>
    <lineage>
        <taxon>Bacteria</taxon>
        <taxon>Pseudomonadati</taxon>
        <taxon>Pseudomonadota</taxon>
        <taxon>Alphaproteobacteria</taxon>
        <taxon>Hyphomicrobiales</taxon>
        <taxon>Rhizobiaceae</taxon>
        <taxon>Sinorhizobium/Ensifer group</taxon>
        <taxon>Sinorhizobium</taxon>
    </lineage>
</organism>
<evidence type="ECO:0000255" key="1">
    <source>
        <dbReference type="HAMAP-Rule" id="MF_00500"/>
    </source>
</evidence>
<evidence type="ECO:0000256" key="2">
    <source>
        <dbReference type="SAM" id="MobiDB-lite"/>
    </source>
</evidence>
<evidence type="ECO:0000305" key="3"/>
<name>RS20_RHIME</name>
<comment type="function">
    <text evidence="1">Binds directly to 16S ribosomal RNA.</text>
</comment>
<comment type="similarity">
    <text evidence="1">Belongs to the bacterial ribosomal protein bS20 family.</text>
</comment>
<proteinExistence type="inferred from homology"/>
<reference key="1">
    <citation type="journal article" date="1995" name="J. Bacteriol.">
        <title>The dnaA gene of Rhizobium meliloti lies within an unusual gene arrangement.</title>
        <authorList>
            <person name="Margolin W."/>
            <person name="Bramhill D."/>
            <person name="Long S.R."/>
        </authorList>
    </citation>
    <scope>NUCLEOTIDE SEQUENCE [GENOMIC DNA]</scope>
    <source>
        <strain>1021</strain>
    </source>
</reference>
<reference key="2">
    <citation type="journal article" date="2001" name="Proc. Natl. Acad. Sci. U.S.A.">
        <title>Analysis of the chromosome sequence of the legume symbiont Sinorhizobium meliloti strain 1021.</title>
        <authorList>
            <person name="Capela D."/>
            <person name="Barloy-Hubler F."/>
            <person name="Gouzy J."/>
            <person name="Bothe G."/>
            <person name="Ampe F."/>
            <person name="Batut J."/>
            <person name="Boistard P."/>
            <person name="Becker A."/>
            <person name="Boutry M."/>
            <person name="Cadieu E."/>
            <person name="Dreano S."/>
            <person name="Gloux S."/>
            <person name="Godrie T."/>
            <person name="Goffeau A."/>
            <person name="Kahn D."/>
            <person name="Kiss E."/>
            <person name="Lelaure V."/>
            <person name="Masuy D."/>
            <person name="Pohl T."/>
            <person name="Portetelle D."/>
            <person name="Puehler A."/>
            <person name="Purnelle B."/>
            <person name="Ramsperger U."/>
            <person name="Renard C."/>
            <person name="Thebault P."/>
            <person name="Vandenbol M."/>
            <person name="Weidner S."/>
            <person name="Galibert F."/>
        </authorList>
    </citation>
    <scope>NUCLEOTIDE SEQUENCE [LARGE SCALE GENOMIC DNA]</scope>
    <source>
        <strain>1021</strain>
    </source>
</reference>
<reference key="3">
    <citation type="journal article" date="2001" name="Science">
        <title>The composite genome of the legume symbiont Sinorhizobium meliloti.</title>
        <authorList>
            <person name="Galibert F."/>
            <person name="Finan T.M."/>
            <person name="Long S.R."/>
            <person name="Puehler A."/>
            <person name="Abola P."/>
            <person name="Ampe F."/>
            <person name="Barloy-Hubler F."/>
            <person name="Barnett M.J."/>
            <person name="Becker A."/>
            <person name="Boistard P."/>
            <person name="Bothe G."/>
            <person name="Boutry M."/>
            <person name="Bowser L."/>
            <person name="Buhrmester J."/>
            <person name="Cadieu E."/>
            <person name="Capela D."/>
            <person name="Chain P."/>
            <person name="Cowie A."/>
            <person name="Davis R.W."/>
            <person name="Dreano S."/>
            <person name="Federspiel N.A."/>
            <person name="Fisher R.F."/>
            <person name="Gloux S."/>
            <person name="Godrie T."/>
            <person name="Goffeau A."/>
            <person name="Golding B."/>
            <person name="Gouzy J."/>
            <person name="Gurjal M."/>
            <person name="Hernandez-Lucas I."/>
            <person name="Hong A."/>
            <person name="Huizar L."/>
            <person name="Hyman R.W."/>
            <person name="Jones T."/>
            <person name="Kahn D."/>
            <person name="Kahn M.L."/>
            <person name="Kalman S."/>
            <person name="Keating D.H."/>
            <person name="Kiss E."/>
            <person name="Komp C."/>
            <person name="Lelaure V."/>
            <person name="Masuy D."/>
            <person name="Palm C."/>
            <person name="Peck M.C."/>
            <person name="Pohl T.M."/>
            <person name="Portetelle D."/>
            <person name="Purnelle B."/>
            <person name="Ramsperger U."/>
            <person name="Surzycki R."/>
            <person name="Thebault P."/>
            <person name="Vandenbol M."/>
            <person name="Vorhoelter F.J."/>
            <person name="Weidner S."/>
            <person name="Wells D.H."/>
            <person name="Wong K."/>
            <person name="Yeh K.-C."/>
            <person name="Batut J."/>
        </authorList>
    </citation>
    <scope>NUCLEOTIDE SEQUENCE [LARGE SCALE GENOMIC DNA]</scope>
    <source>
        <strain>1021</strain>
    </source>
</reference>
<keyword id="KW-1185">Reference proteome</keyword>
<keyword id="KW-0687">Ribonucleoprotein</keyword>
<keyword id="KW-0689">Ribosomal protein</keyword>
<keyword id="KW-0694">RNA-binding</keyword>
<keyword id="KW-0699">rRNA-binding</keyword>
<sequence>MANTTSAKKATRKIARRSAVNKARRSRIRSFVRKVEEAIASGDQALAAAALKAAQPELMRAATKGVMHSNTASRKVSRLAQRVKSLSA</sequence>
<feature type="chain" id="PRO_0000168019" description="Small ribosomal subunit protein bS20">
    <location>
        <begin position="1"/>
        <end position="88"/>
    </location>
</feature>
<feature type="region of interest" description="Disordered" evidence="2">
    <location>
        <begin position="1"/>
        <end position="23"/>
    </location>
</feature>
<feature type="region of interest" description="Disordered" evidence="2">
    <location>
        <begin position="65"/>
        <end position="88"/>
    </location>
</feature>
<feature type="sequence conflict" description="In Ref. 1; AAA91096." evidence="3" ref="1">
    <original>A</original>
    <variation>P</variation>
    <location>
        <position position="61"/>
    </location>
</feature>